<name>NFUA_HAEI8</name>
<comment type="function">
    <text evidence="1">Involved in iron-sulfur cluster biogenesis. Binds a 4Fe-4S cluster, can transfer this cluster to apoproteins, and thereby intervenes in the maturation of Fe/S proteins. Could also act as a scaffold/chaperone for damaged Fe/S proteins.</text>
</comment>
<comment type="cofactor">
    <cofactor evidence="1">
        <name>[4Fe-4S] cluster</name>
        <dbReference type="ChEBI" id="CHEBI:49883"/>
    </cofactor>
    <text evidence="1">Binds 1 [4Fe-4S] cluster per subunit. The cluster is presumably bound at the interface of two monomers.</text>
</comment>
<comment type="subunit">
    <text evidence="1">Homodimer.</text>
</comment>
<comment type="similarity">
    <text evidence="1">Belongs to the NfuA family.</text>
</comment>
<sequence length="198" mass="21884">MEQATQQIAISDAAQAHFRKLLDTQEEGTNIRIFVVNPGTPNAECGVSYCPPNAVEESDIEMKYNTFSAFIDEVSLPFLEEAEIDYVTEELGAQLTLKAPNAKMRKVADDAPLIERVEYVIQTQINPQLANHGGRITLIEITEDGYAVLQFGGGCNGCSMVDVTLKDGVEKQLVSLFPNELKGAKDITEHQRGEHSYY</sequence>
<protein>
    <recommendedName>
        <fullName evidence="1">Fe/S biogenesis protein NfuA</fullName>
    </recommendedName>
</protein>
<organism>
    <name type="scientific">Haemophilus influenzae (strain 86-028NP)</name>
    <dbReference type="NCBI Taxonomy" id="281310"/>
    <lineage>
        <taxon>Bacteria</taxon>
        <taxon>Pseudomonadati</taxon>
        <taxon>Pseudomonadota</taxon>
        <taxon>Gammaproteobacteria</taxon>
        <taxon>Pasteurellales</taxon>
        <taxon>Pasteurellaceae</taxon>
        <taxon>Haemophilus</taxon>
    </lineage>
</organism>
<dbReference type="EMBL" id="CP000057">
    <property type="protein sequence ID" value="AAX87485.1"/>
    <property type="molecule type" value="Genomic_DNA"/>
</dbReference>
<dbReference type="RefSeq" id="WP_005649300.1">
    <property type="nucleotide sequence ID" value="NC_007146.2"/>
</dbReference>
<dbReference type="SMR" id="Q4QNB2"/>
<dbReference type="GeneID" id="93219446"/>
<dbReference type="KEGG" id="hit:NTHI0558"/>
<dbReference type="HOGENOM" id="CLU_094569_0_0_6"/>
<dbReference type="Proteomes" id="UP000002525">
    <property type="component" value="Chromosome"/>
</dbReference>
<dbReference type="GO" id="GO:0051539">
    <property type="term" value="F:4 iron, 4 sulfur cluster binding"/>
    <property type="evidence" value="ECO:0007669"/>
    <property type="project" value="UniProtKB-UniRule"/>
</dbReference>
<dbReference type="GO" id="GO:0005506">
    <property type="term" value="F:iron ion binding"/>
    <property type="evidence" value="ECO:0007669"/>
    <property type="project" value="InterPro"/>
</dbReference>
<dbReference type="GO" id="GO:0016226">
    <property type="term" value="P:iron-sulfur cluster assembly"/>
    <property type="evidence" value="ECO:0007669"/>
    <property type="project" value="UniProtKB-UniRule"/>
</dbReference>
<dbReference type="GO" id="GO:0051604">
    <property type="term" value="P:protein maturation"/>
    <property type="evidence" value="ECO:0007669"/>
    <property type="project" value="UniProtKB-UniRule"/>
</dbReference>
<dbReference type="Gene3D" id="3.30.300.130">
    <property type="entry name" value="Fe-S cluster assembly (FSCA)"/>
    <property type="match status" value="1"/>
</dbReference>
<dbReference type="Gene3D" id="2.60.300.12">
    <property type="entry name" value="HesB-like domain"/>
    <property type="match status" value="1"/>
</dbReference>
<dbReference type="HAMAP" id="MF_01637">
    <property type="entry name" value="Fe_S_biogen_NfuA"/>
    <property type="match status" value="1"/>
</dbReference>
<dbReference type="InterPro" id="IPR017726">
    <property type="entry name" value="Fe/S_biogenesis_protein_NfuA"/>
</dbReference>
<dbReference type="InterPro" id="IPR000361">
    <property type="entry name" value="FeS_biogenesis"/>
</dbReference>
<dbReference type="InterPro" id="IPR034904">
    <property type="entry name" value="FSCA_dom_sf"/>
</dbReference>
<dbReference type="InterPro" id="IPR035903">
    <property type="entry name" value="HesB-like_dom_sf"/>
</dbReference>
<dbReference type="InterPro" id="IPR001075">
    <property type="entry name" value="NIF_FeS_clus_asmbl_NifU_C"/>
</dbReference>
<dbReference type="NCBIfam" id="NF008392">
    <property type="entry name" value="PRK11190.1"/>
    <property type="match status" value="1"/>
</dbReference>
<dbReference type="NCBIfam" id="TIGR03341">
    <property type="entry name" value="YhgI_GntY"/>
    <property type="match status" value="1"/>
</dbReference>
<dbReference type="PANTHER" id="PTHR11178:SF51">
    <property type="entry name" value="FE_S BIOGENESIS PROTEIN NFUA"/>
    <property type="match status" value="1"/>
</dbReference>
<dbReference type="PANTHER" id="PTHR11178">
    <property type="entry name" value="IRON-SULFUR CLUSTER SCAFFOLD PROTEIN NFU-RELATED"/>
    <property type="match status" value="1"/>
</dbReference>
<dbReference type="Pfam" id="PF01521">
    <property type="entry name" value="Fe-S_biosyn"/>
    <property type="match status" value="1"/>
</dbReference>
<dbReference type="Pfam" id="PF01106">
    <property type="entry name" value="NifU"/>
    <property type="match status" value="1"/>
</dbReference>
<dbReference type="SUPFAM" id="SSF117916">
    <property type="entry name" value="Fe-S cluster assembly (FSCA) domain-like"/>
    <property type="match status" value="1"/>
</dbReference>
<dbReference type="SUPFAM" id="SSF89360">
    <property type="entry name" value="HesB-like domain"/>
    <property type="match status" value="1"/>
</dbReference>
<reference key="1">
    <citation type="journal article" date="2005" name="J. Bacteriol.">
        <title>Genomic sequence of an otitis media isolate of nontypeable Haemophilus influenzae: comparative study with H. influenzae serotype d, strain KW20.</title>
        <authorList>
            <person name="Harrison A."/>
            <person name="Dyer D.W."/>
            <person name="Gillaspy A."/>
            <person name="Ray W.C."/>
            <person name="Mungur R."/>
            <person name="Carson M.B."/>
            <person name="Zhong H."/>
            <person name="Gipson J."/>
            <person name="Gipson M."/>
            <person name="Johnson L.S."/>
            <person name="Lewis L."/>
            <person name="Bakaletz L.O."/>
            <person name="Munson R.S. Jr."/>
        </authorList>
    </citation>
    <scope>NUCLEOTIDE SEQUENCE [LARGE SCALE GENOMIC DNA]</scope>
    <source>
        <strain>86-028NP</strain>
    </source>
</reference>
<proteinExistence type="inferred from homology"/>
<accession>Q4QNB2</accession>
<feature type="chain" id="PRO_0000268231" description="Fe/S biogenesis protein NfuA">
    <location>
        <begin position="1"/>
        <end position="198"/>
    </location>
</feature>
<feature type="binding site" evidence="1">
    <location>
        <position position="155"/>
    </location>
    <ligand>
        <name>[4Fe-4S] cluster</name>
        <dbReference type="ChEBI" id="CHEBI:49883"/>
    </ligand>
</feature>
<feature type="binding site" evidence="1">
    <location>
        <position position="158"/>
    </location>
    <ligand>
        <name>[4Fe-4S] cluster</name>
        <dbReference type="ChEBI" id="CHEBI:49883"/>
    </ligand>
</feature>
<keyword id="KW-0004">4Fe-4S</keyword>
<keyword id="KW-0408">Iron</keyword>
<keyword id="KW-0411">Iron-sulfur</keyword>
<keyword id="KW-0479">Metal-binding</keyword>
<gene>
    <name evidence="1" type="primary">nfuA</name>
    <name type="synonym">orfG</name>
    <name type="ordered locus">NTHI0558</name>
</gene>
<evidence type="ECO:0000255" key="1">
    <source>
        <dbReference type="HAMAP-Rule" id="MF_01637"/>
    </source>
</evidence>